<name>FABZ_WOLPP</name>
<dbReference type="EC" id="4.2.1.59" evidence="1"/>
<dbReference type="EMBL" id="AM999887">
    <property type="protein sequence ID" value="CAQ55143.1"/>
    <property type="molecule type" value="Genomic_DNA"/>
</dbReference>
<dbReference type="RefSeq" id="WP_006014455.1">
    <property type="nucleotide sequence ID" value="NC_010981.1"/>
</dbReference>
<dbReference type="SMR" id="B3CMM1"/>
<dbReference type="KEGG" id="wpi:WP1035"/>
<dbReference type="eggNOG" id="COG0764">
    <property type="taxonomic scope" value="Bacteria"/>
</dbReference>
<dbReference type="HOGENOM" id="CLU_078912_3_0_5"/>
<dbReference type="Proteomes" id="UP000008814">
    <property type="component" value="Chromosome"/>
</dbReference>
<dbReference type="GO" id="GO:0005737">
    <property type="term" value="C:cytoplasm"/>
    <property type="evidence" value="ECO:0007669"/>
    <property type="project" value="UniProtKB-SubCell"/>
</dbReference>
<dbReference type="GO" id="GO:0016020">
    <property type="term" value="C:membrane"/>
    <property type="evidence" value="ECO:0007669"/>
    <property type="project" value="GOC"/>
</dbReference>
<dbReference type="GO" id="GO:0019171">
    <property type="term" value="F:(3R)-hydroxyacyl-[acyl-carrier-protein] dehydratase activity"/>
    <property type="evidence" value="ECO:0007669"/>
    <property type="project" value="UniProtKB-EC"/>
</dbReference>
<dbReference type="GO" id="GO:0006633">
    <property type="term" value="P:fatty acid biosynthetic process"/>
    <property type="evidence" value="ECO:0007669"/>
    <property type="project" value="UniProtKB-UniRule"/>
</dbReference>
<dbReference type="GO" id="GO:0009245">
    <property type="term" value="P:lipid A biosynthetic process"/>
    <property type="evidence" value="ECO:0007669"/>
    <property type="project" value="UniProtKB-UniRule"/>
</dbReference>
<dbReference type="CDD" id="cd01288">
    <property type="entry name" value="FabZ"/>
    <property type="match status" value="1"/>
</dbReference>
<dbReference type="FunFam" id="3.10.129.10:FF:000001">
    <property type="entry name" value="3-hydroxyacyl-[acyl-carrier-protein] dehydratase FabZ"/>
    <property type="match status" value="1"/>
</dbReference>
<dbReference type="Gene3D" id="3.10.129.10">
    <property type="entry name" value="Hotdog Thioesterase"/>
    <property type="match status" value="1"/>
</dbReference>
<dbReference type="HAMAP" id="MF_00406">
    <property type="entry name" value="FabZ"/>
    <property type="match status" value="1"/>
</dbReference>
<dbReference type="InterPro" id="IPR013114">
    <property type="entry name" value="FabA_FabZ"/>
</dbReference>
<dbReference type="InterPro" id="IPR010084">
    <property type="entry name" value="FabZ"/>
</dbReference>
<dbReference type="InterPro" id="IPR029069">
    <property type="entry name" value="HotDog_dom_sf"/>
</dbReference>
<dbReference type="NCBIfam" id="TIGR01750">
    <property type="entry name" value="fabZ"/>
    <property type="match status" value="1"/>
</dbReference>
<dbReference type="NCBIfam" id="NF000582">
    <property type="entry name" value="PRK00006.1"/>
    <property type="match status" value="1"/>
</dbReference>
<dbReference type="PANTHER" id="PTHR30272">
    <property type="entry name" value="3-HYDROXYACYL-[ACYL-CARRIER-PROTEIN] DEHYDRATASE"/>
    <property type="match status" value="1"/>
</dbReference>
<dbReference type="PANTHER" id="PTHR30272:SF1">
    <property type="entry name" value="3-HYDROXYACYL-[ACYL-CARRIER-PROTEIN] DEHYDRATASE"/>
    <property type="match status" value="1"/>
</dbReference>
<dbReference type="Pfam" id="PF07977">
    <property type="entry name" value="FabA"/>
    <property type="match status" value="1"/>
</dbReference>
<dbReference type="SUPFAM" id="SSF54637">
    <property type="entry name" value="Thioesterase/thiol ester dehydrase-isomerase"/>
    <property type="match status" value="1"/>
</dbReference>
<accession>B3CMM1</accession>
<reference key="1">
    <citation type="journal article" date="2008" name="Mol. Biol. Evol.">
        <title>Genome evolution of Wolbachia strain wPip from the Culex pipiens group.</title>
        <authorList>
            <person name="Klasson L."/>
            <person name="Walker T."/>
            <person name="Sebaihia M."/>
            <person name="Sanders M.J."/>
            <person name="Quail M.A."/>
            <person name="Lord A."/>
            <person name="Sanders S."/>
            <person name="Earl J."/>
            <person name="O'Neill S.L."/>
            <person name="Thomson N."/>
            <person name="Sinkins S.P."/>
            <person name="Parkhill J."/>
        </authorList>
    </citation>
    <scope>NUCLEOTIDE SEQUENCE [LARGE SCALE GENOMIC DNA]</scope>
    <source>
        <strain>wPip</strain>
    </source>
</reference>
<organism>
    <name type="scientific">Wolbachia pipientis subsp. Culex pipiens (strain wPip)</name>
    <dbReference type="NCBI Taxonomy" id="570417"/>
    <lineage>
        <taxon>Bacteria</taxon>
        <taxon>Pseudomonadati</taxon>
        <taxon>Pseudomonadota</taxon>
        <taxon>Alphaproteobacteria</taxon>
        <taxon>Rickettsiales</taxon>
        <taxon>Anaplasmataceae</taxon>
        <taxon>Wolbachieae</taxon>
        <taxon>Wolbachia</taxon>
    </lineage>
</organism>
<sequence length="143" mass="15810">MQCNINDIIKILPHSYPFLLVDRVIECDPGMSIKAIKNVTFNEQFFIGHFPGHPIMPGVLIIESLAQASAICVLGKKTVENKVVYFMSIENAKFRKPVTPGDTLILQSNFEGLRLGVYKFKCVASVGKEEVAGATILAKLQDK</sequence>
<gene>
    <name evidence="1" type="primary">fabZ</name>
    <name type="ordered locus">WP1035</name>
</gene>
<evidence type="ECO:0000255" key="1">
    <source>
        <dbReference type="HAMAP-Rule" id="MF_00406"/>
    </source>
</evidence>
<keyword id="KW-0963">Cytoplasm</keyword>
<keyword id="KW-0441">Lipid A biosynthesis</keyword>
<keyword id="KW-0444">Lipid biosynthesis</keyword>
<keyword id="KW-0443">Lipid metabolism</keyword>
<keyword id="KW-0456">Lyase</keyword>
<proteinExistence type="inferred from homology"/>
<protein>
    <recommendedName>
        <fullName evidence="1">3-hydroxyacyl-[acyl-carrier-protein] dehydratase FabZ</fullName>
        <ecNumber evidence="1">4.2.1.59</ecNumber>
    </recommendedName>
    <alternativeName>
        <fullName evidence="1">(3R)-hydroxymyristoyl-[acyl-carrier-protein] dehydratase</fullName>
        <shortName evidence="1">(3R)-hydroxymyristoyl-ACP dehydrase</shortName>
    </alternativeName>
    <alternativeName>
        <fullName evidence="1">Beta-hydroxyacyl-ACP dehydratase</fullName>
    </alternativeName>
</protein>
<feature type="chain" id="PRO_1000123676" description="3-hydroxyacyl-[acyl-carrier-protein] dehydratase FabZ">
    <location>
        <begin position="1"/>
        <end position="143"/>
    </location>
</feature>
<feature type="active site" evidence="1">
    <location>
        <position position="49"/>
    </location>
</feature>
<comment type="function">
    <text evidence="1">Involved in unsaturated fatty acids biosynthesis. Catalyzes the dehydration of short chain beta-hydroxyacyl-ACPs and long chain saturated and unsaturated beta-hydroxyacyl-ACPs.</text>
</comment>
<comment type="catalytic activity">
    <reaction evidence="1">
        <text>a (3R)-hydroxyacyl-[ACP] = a (2E)-enoyl-[ACP] + H2O</text>
        <dbReference type="Rhea" id="RHEA:13097"/>
        <dbReference type="Rhea" id="RHEA-COMP:9925"/>
        <dbReference type="Rhea" id="RHEA-COMP:9945"/>
        <dbReference type="ChEBI" id="CHEBI:15377"/>
        <dbReference type="ChEBI" id="CHEBI:78784"/>
        <dbReference type="ChEBI" id="CHEBI:78827"/>
        <dbReference type="EC" id="4.2.1.59"/>
    </reaction>
</comment>
<comment type="subcellular location">
    <subcellularLocation>
        <location evidence="1">Cytoplasm</location>
    </subcellularLocation>
</comment>
<comment type="similarity">
    <text evidence="1">Belongs to the thioester dehydratase family. FabZ subfamily.</text>
</comment>